<comment type="function">
    <text evidence="1">Exhibits a very high intrinsic GTPase hydrolysis rate. Involved in the addition of a carboxymethylaminomethyl (cmnm) group at the wobble position (U34) of certain tRNAs, forming tRNA-cmnm(5)s(2)U34.</text>
</comment>
<comment type="cofactor">
    <cofactor evidence="1">
        <name>K(+)</name>
        <dbReference type="ChEBI" id="CHEBI:29103"/>
    </cofactor>
    <text evidence="1">Binds 1 potassium ion per subunit.</text>
</comment>
<comment type="subunit">
    <text evidence="1">Homodimer. Heterotetramer of two MnmE and two MnmG subunits.</text>
</comment>
<comment type="subcellular location">
    <subcellularLocation>
        <location evidence="1">Cytoplasm</location>
    </subcellularLocation>
</comment>
<comment type="similarity">
    <text evidence="1">Belongs to the TRAFAC class TrmE-Era-EngA-EngB-Septin-like GTPase superfamily. TrmE GTPase family.</text>
</comment>
<gene>
    <name evidence="1" type="primary">mnmE</name>
    <name evidence="1" type="synonym">trmE</name>
    <name type="ordered locus">BamMC406_3097</name>
</gene>
<sequence>MLATDSDPIVAIATAAGRGGIGVVRVSFGRGGEAAALPLIDALCGQQLAPRHASYVPFVDEHGAPLDRGIALYFPAPHSYTGEHVLELQGHGGPIVMQLLLQRCLDAGRGFGLRLAQPGEFTRRAFLNDKLDLAQAEAVADLIEASTEAAARSAGRSLDGAFSRQIHALVEDVITLRMLVEATLDFPEEEIDFLEAADARGKLARIREQLAHVLGDARQGALLREGLSVVLAGQPNVGKSSLLNALAGAELAIVTPIAGTTRDKVAQTIQVEGIPLHIIDTAGLRETEDEVERIGIARTWSEIERADVVLHLLDSRTGMTADDEVIAARFPGGVPVVRVLNKTDLTGVPACVEHPAAAGDLTEVHLSAKRGDGIDMLRAELLRIAGWQAGAEGVYLARERHLIALRAAQEHLAQAADHAEQRAQSLDLFAEELRLAQEQLNAITGEFTSDDLLGVIFSRFCIGK</sequence>
<keyword id="KW-0963">Cytoplasm</keyword>
<keyword id="KW-0342">GTP-binding</keyword>
<keyword id="KW-0378">Hydrolase</keyword>
<keyword id="KW-0460">Magnesium</keyword>
<keyword id="KW-0479">Metal-binding</keyword>
<keyword id="KW-0547">Nucleotide-binding</keyword>
<keyword id="KW-0630">Potassium</keyword>
<keyword id="KW-0819">tRNA processing</keyword>
<feature type="chain" id="PRO_0000345736" description="tRNA modification GTPase MnmE">
    <location>
        <begin position="1"/>
        <end position="464"/>
    </location>
</feature>
<feature type="domain" description="TrmE-type G">
    <location>
        <begin position="226"/>
        <end position="386"/>
    </location>
</feature>
<feature type="binding site" evidence="1">
    <location>
        <position position="25"/>
    </location>
    <ligand>
        <name>(6S)-5-formyl-5,6,7,8-tetrahydrofolate</name>
        <dbReference type="ChEBI" id="CHEBI:57457"/>
    </ligand>
</feature>
<feature type="binding site" evidence="1">
    <location>
        <position position="87"/>
    </location>
    <ligand>
        <name>(6S)-5-formyl-5,6,7,8-tetrahydrofolate</name>
        <dbReference type="ChEBI" id="CHEBI:57457"/>
    </ligand>
</feature>
<feature type="binding site" evidence="1">
    <location>
        <position position="130"/>
    </location>
    <ligand>
        <name>(6S)-5-formyl-5,6,7,8-tetrahydrofolate</name>
        <dbReference type="ChEBI" id="CHEBI:57457"/>
    </ligand>
</feature>
<feature type="binding site" evidence="1">
    <location>
        <begin position="236"/>
        <end position="241"/>
    </location>
    <ligand>
        <name>GTP</name>
        <dbReference type="ChEBI" id="CHEBI:37565"/>
    </ligand>
</feature>
<feature type="binding site" evidence="1">
    <location>
        <position position="236"/>
    </location>
    <ligand>
        <name>K(+)</name>
        <dbReference type="ChEBI" id="CHEBI:29103"/>
    </ligand>
</feature>
<feature type="binding site" evidence="1">
    <location>
        <position position="240"/>
    </location>
    <ligand>
        <name>Mg(2+)</name>
        <dbReference type="ChEBI" id="CHEBI:18420"/>
    </ligand>
</feature>
<feature type="binding site" evidence="1">
    <location>
        <begin position="255"/>
        <end position="261"/>
    </location>
    <ligand>
        <name>GTP</name>
        <dbReference type="ChEBI" id="CHEBI:37565"/>
    </ligand>
</feature>
<feature type="binding site" evidence="1">
    <location>
        <position position="255"/>
    </location>
    <ligand>
        <name>K(+)</name>
        <dbReference type="ChEBI" id="CHEBI:29103"/>
    </ligand>
</feature>
<feature type="binding site" evidence="1">
    <location>
        <position position="257"/>
    </location>
    <ligand>
        <name>K(+)</name>
        <dbReference type="ChEBI" id="CHEBI:29103"/>
    </ligand>
</feature>
<feature type="binding site" evidence="1">
    <location>
        <position position="260"/>
    </location>
    <ligand>
        <name>K(+)</name>
        <dbReference type="ChEBI" id="CHEBI:29103"/>
    </ligand>
</feature>
<feature type="binding site" evidence="1">
    <location>
        <position position="261"/>
    </location>
    <ligand>
        <name>Mg(2+)</name>
        <dbReference type="ChEBI" id="CHEBI:18420"/>
    </ligand>
</feature>
<feature type="binding site" evidence="1">
    <location>
        <begin position="280"/>
        <end position="283"/>
    </location>
    <ligand>
        <name>GTP</name>
        <dbReference type="ChEBI" id="CHEBI:37565"/>
    </ligand>
</feature>
<feature type="binding site" evidence="1">
    <location>
        <position position="464"/>
    </location>
    <ligand>
        <name>(6S)-5-formyl-5,6,7,8-tetrahydrofolate</name>
        <dbReference type="ChEBI" id="CHEBI:57457"/>
    </ligand>
</feature>
<reference key="1">
    <citation type="submission" date="2008-04" db="EMBL/GenBank/DDBJ databases">
        <title>Complete sequence of chromosome 1 of Burkholderia ambifaria MC40-6.</title>
        <authorList>
            <person name="Copeland A."/>
            <person name="Lucas S."/>
            <person name="Lapidus A."/>
            <person name="Glavina del Rio T."/>
            <person name="Dalin E."/>
            <person name="Tice H."/>
            <person name="Pitluck S."/>
            <person name="Chain P."/>
            <person name="Malfatti S."/>
            <person name="Shin M."/>
            <person name="Vergez L."/>
            <person name="Lang D."/>
            <person name="Schmutz J."/>
            <person name="Larimer F."/>
            <person name="Land M."/>
            <person name="Hauser L."/>
            <person name="Kyrpides N."/>
            <person name="Lykidis A."/>
            <person name="Ramette A."/>
            <person name="Konstantinidis K."/>
            <person name="Tiedje J."/>
            <person name="Richardson P."/>
        </authorList>
    </citation>
    <scope>NUCLEOTIDE SEQUENCE [LARGE SCALE GENOMIC DNA]</scope>
    <source>
        <strain>MC40-6</strain>
    </source>
</reference>
<dbReference type="EC" id="3.6.-.-" evidence="1"/>
<dbReference type="EMBL" id="CP001025">
    <property type="protein sequence ID" value="ACB65572.1"/>
    <property type="molecule type" value="Genomic_DNA"/>
</dbReference>
<dbReference type="RefSeq" id="WP_012365025.1">
    <property type="nucleotide sequence ID" value="NC_010551.1"/>
</dbReference>
<dbReference type="SMR" id="B1YQJ5"/>
<dbReference type="KEGG" id="bac:BamMC406_3097"/>
<dbReference type="HOGENOM" id="CLU_019624_4_1_4"/>
<dbReference type="OrthoDB" id="9805918at2"/>
<dbReference type="Proteomes" id="UP000001680">
    <property type="component" value="Chromosome 1"/>
</dbReference>
<dbReference type="GO" id="GO:0005829">
    <property type="term" value="C:cytosol"/>
    <property type="evidence" value="ECO:0007669"/>
    <property type="project" value="TreeGrafter"/>
</dbReference>
<dbReference type="GO" id="GO:0005525">
    <property type="term" value="F:GTP binding"/>
    <property type="evidence" value="ECO:0007669"/>
    <property type="project" value="UniProtKB-UniRule"/>
</dbReference>
<dbReference type="GO" id="GO:0003924">
    <property type="term" value="F:GTPase activity"/>
    <property type="evidence" value="ECO:0007669"/>
    <property type="project" value="UniProtKB-UniRule"/>
</dbReference>
<dbReference type="GO" id="GO:0046872">
    <property type="term" value="F:metal ion binding"/>
    <property type="evidence" value="ECO:0007669"/>
    <property type="project" value="UniProtKB-KW"/>
</dbReference>
<dbReference type="GO" id="GO:0030488">
    <property type="term" value="P:tRNA methylation"/>
    <property type="evidence" value="ECO:0007669"/>
    <property type="project" value="TreeGrafter"/>
</dbReference>
<dbReference type="GO" id="GO:0002098">
    <property type="term" value="P:tRNA wobble uridine modification"/>
    <property type="evidence" value="ECO:0007669"/>
    <property type="project" value="TreeGrafter"/>
</dbReference>
<dbReference type="CDD" id="cd04164">
    <property type="entry name" value="trmE"/>
    <property type="match status" value="1"/>
</dbReference>
<dbReference type="CDD" id="cd14858">
    <property type="entry name" value="TrmE_N"/>
    <property type="match status" value="1"/>
</dbReference>
<dbReference type="Gene3D" id="3.40.50.300">
    <property type="entry name" value="P-loop containing nucleotide triphosphate hydrolases"/>
    <property type="match status" value="1"/>
</dbReference>
<dbReference type="Gene3D" id="3.30.1360.120">
    <property type="entry name" value="Probable tRNA modification gtpase trme, domain 1"/>
    <property type="match status" value="1"/>
</dbReference>
<dbReference type="Gene3D" id="1.20.120.430">
    <property type="entry name" value="tRNA modification GTPase MnmE domain 2"/>
    <property type="match status" value="1"/>
</dbReference>
<dbReference type="HAMAP" id="MF_00379">
    <property type="entry name" value="GTPase_MnmE"/>
    <property type="match status" value="1"/>
</dbReference>
<dbReference type="InterPro" id="IPR031168">
    <property type="entry name" value="G_TrmE"/>
</dbReference>
<dbReference type="InterPro" id="IPR006073">
    <property type="entry name" value="GTP-bd"/>
</dbReference>
<dbReference type="InterPro" id="IPR018948">
    <property type="entry name" value="GTP-bd_TrmE_N"/>
</dbReference>
<dbReference type="InterPro" id="IPR004520">
    <property type="entry name" value="GTPase_MnmE"/>
</dbReference>
<dbReference type="InterPro" id="IPR027368">
    <property type="entry name" value="MnmE_dom2"/>
</dbReference>
<dbReference type="InterPro" id="IPR025867">
    <property type="entry name" value="MnmE_helical"/>
</dbReference>
<dbReference type="InterPro" id="IPR027417">
    <property type="entry name" value="P-loop_NTPase"/>
</dbReference>
<dbReference type="InterPro" id="IPR005225">
    <property type="entry name" value="Small_GTP-bd"/>
</dbReference>
<dbReference type="InterPro" id="IPR027266">
    <property type="entry name" value="TrmE/GcvT_dom1"/>
</dbReference>
<dbReference type="NCBIfam" id="TIGR00450">
    <property type="entry name" value="mnmE_trmE_thdF"/>
    <property type="match status" value="1"/>
</dbReference>
<dbReference type="NCBIfam" id="NF003661">
    <property type="entry name" value="PRK05291.1-3"/>
    <property type="match status" value="1"/>
</dbReference>
<dbReference type="NCBIfam" id="TIGR00231">
    <property type="entry name" value="small_GTP"/>
    <property type="match status" value="1"/>
</dbReference>
<dbReference type="PANTHER" id="PTHR42714">
    <property type="entry name" value="TRNA MODIFICATION GTPASE GTPBP3"/>
    <property type="match status" value="1"/>
</dbReference>
<dbReference type="PANTHER" id="PTHR42714:SF2">
    <property type="entry name" value="TRNA MODIFICATION GTPASE GTPBP3, MITOCHONDRIAL"/>
    <property type="match status" value="1"/>
</dbReference>
<dbReference type="Pfam" id="PF01926">
    <property type="entry name" value="MMR_HSR1"/>
    <property type="match status" value="1"/>
</dbReference>
<dbReference type="Pfam" id="PF12631">
    <property type="entry name" value="MnmE_helical"/>
    <property type="match status" value="1"/>
</dbReference>
<dbReference type="Pfam" id="PF10396">
    <property type="entry name" value="TrmE_N"/>
    <property type="match status" value="1"/>
</dbReference>
<dbReference type="PRINTS" id="PR00326">
    <property type="entry name" value="GTP1OBG"/>
</dbReference>
<dbReference type="SUPFAM" id="SSF52540">
    <property type="entry name" value="P-loop containing nucleoside triphosphate hydrolases"/>
    <property type="match status" value="1"/>
</dbReference>
<dbReference type="SUPFAM" id="SSF116878">
    <property type="entry name" value="TrmE connector domain"/>
    <property type="match status" value="1"/>
</dbReference>
<dbReference type="PROSITE" id="PS51709">
    <property type="entry name" value="G_TRME"/>
    <property type="match status" value="1"/>
</dbReference>
<proteinExistence type="inferred from homology"/>
<organism>
    <name type="scientific">Burkholderia ambifaria (strain MC40-6)</name>
    <dbReference type="NCBI Taxonomy" id="398577"/>
    <lineage>
        <taxon>Bacteria</taxon>
        <taxon>Pseudomonadati</taxon>
        <taxon>Pseudomonadota</taxon>
        <taxon>Betaproteobacteria</taxon>
        <taxon>Burkholderiales</taxon>
        <taxon>Burkholderiaceae</taxon>
        <taxon>Burkholderia</taxon>
        <taxon>Burkholderia cepacia complex</taxon>
    </lineage>
</organism>
<protein>
    <recommendedName>
        <fullName evidence="1">tRNA modification GTPase MnmE</fullName>
        <ecNumber evidence="1">3.6.-.-</ecNumber>
    </recommendedName>
</protein>
<name>MNME_BURA4</name>
<evidence type="ECO:0000255" key="1">
    <source>
        <dbReference type="HAMAP-Rule" id="MF_00379"/>
    </source>
</evidence>
<accession>B1YQJ5</accession>